<proteinExistence type="inferred from homology"/>
<dbReference type="EMBL" id="AL138655">
    <property type="status" value="NOT_ANNOTATED_CDS"/>
    <property type="molecule type" value="Genomic_DNA"/>
</dbReference>
<dbReference type="EMBL" id="CP002686">
    <property type="protein sequence ID" value="AEE79622.2"/>
    <property type="molecule type" value="Genomic_DNA"/>
</dbReference>
<dbReference type="EMBL" id="AY086526">
    <property type="protein sequence ID" value="AAM63525.1"/>
    <property type="molecule type" value="mRNA"/>
</dbReference>
<dbReference type="EMBL" id="DQ446772">
    <property type="protein sequence ID" value="ABE66023.1"/>
    <property type="status" value="ALT_SEQ"/>
    <property type="molecule type" value="mRNA"/>
</dbReference>
<dbReference type="EMBL" id="DQ653154">
    <property type="protein sequence ID" value="ABK28604.1"/>
    <property type="status" value="ALT_SEQ"/>
    <property type="molecule type" value="mRNA"/>
</dbReference>
<dbReference type="EMBL" id="BT024783">
    <property type="protein sequence ID" value="ABD59121.1"/>
    <property type="status" value="ALT_SEQ"/>
    <property type="molecule type" value="mRNA"/>
</dbReference>
<dbReference type="RefSeq" id="NP_001319774.1">
    <property type="nucleotide sequence ID" value="NM_001339842.1"/>
</dbReference>
<dbReference type="SMR" id="Q8LCL8"/>
<dbReference type="STRING" id="3702.Q8LCL8"/>
<dbReference type="ProteomicsDB" id="222754"/>
<dbReference type="EnsemblPlants" id="AT3G57160.1">
    <property type="protein sequence ID" value="AT3G57160.1"/>
    <property type="gene ID" value="AT3G57160"/>
</dbReference>
<dbReference type="GeneID" id="824883"/>
<dbReference type="Gramene" id="AT3G57160.1">
    <property type="protein sequence ID" value="AT3G57160.1"/>
    <property type="gene ID" value="AT3G57160"/>
</dbReference>
<dbReference type="KEGG" id="ath:AT3G57160"/>
<dbReference type="Araport" id="AT3G57160"/>
<dbReference type="TAIR" id="AT3G57160"/>
<dbReference type="InParanoid" id="Q8LCL8"/>
<dbReference type="PRO" id="PR:Q8LCL8"/>
<dbReference type="Proteomes" id="UP000006548">
    <property type="component" value="Chromosome 3"/>
</dbReference>
<dbReference type="ExpressionAtlas" id="Q8LCL8">
    <property type="expression patterns" value="baseline and differential"/>
</dbReference>
<dbReference type="GO" id="GO:0016020">
    <property type="term" value="C:membrane"/>
    <property type="evidence" value="ECO:0007669"/>
    <property type="project" value="UniProtKB-SubCell"/>
</dbReference>
<dbReference type="InterPro" id="IPR028144">
    <property type="entry name" value="CYSTM_dom"/>
</dbReference>
<dbReference type="PANTHER" id="PTHR31248">
    <property type="entry name" value="DOMAIN PROTEIN, PUTATIVE (AFU_ORTHOLOGUE AFUA_5G04290)-RELATED"/>
    <property type="match status" value="1"/>
</dbReference>
<dbReference type="PANTHER" id="PTHR31248:SF28">
    <property type="entry name" value="PROTEIN CYSTEINE-RICH TRANSMEMBRANE MODULE 10"/>
    <property type="match status" value="1"/>
</dbReference>
<dbReference type="Pfam" id="PF12734">
    <property type="entry name" value="CYSTM"/>
    <property type="match status" value="1"/>
</dbReference>
<dbReference type="PRINTS" id="PR00239">
    <property type="entry name" value="RHODOPSNTAIL"/>
</dbReference>
<sequence>MSQQPPAVGVPPSHAYPAEGPPKDAYPPPGQPYPQQGYPPPQGYPQQGYPPQGYPPQGYPEQGYPQQGYPPQQQQQQKHSPGMLEGCIAALCCYCVLDACF</sequence>
<comment type="subcellular location">
    <subcellularLocation>
        <location evidence="3">Membrane</location>
        <topology evidence="3">Single-pass membrane protein</topology>
    </subcellularLocation>
</comment>
<comment type="similarity">
    <text evidence="3">Belongs to the CYSTM1 family.</text>
</comment>
<comment type="sequence caution" evidence="3">
    <conflict type="erroneous translation">
        <sequence resource="EMBL-CDS" id="ABD59121"/>
    </conflict>
    <text>Wrong choice of frame.</text>
</comment>
<comment type="sequence caution" evidence="3">
    <conflict type="erroneous translation">
        <sequence resource="EMBL-CDS" id="ABE66023"/>
    </conflict>
    <text>Wrong choice of frame.</text>
</comment>
<comment type="sequence caution" evidence="3">
    <conflict type="erroneous translation">
        <sequence resource="EMBL-CDS" id="ABK28604"/>
    </conflict>
    <text>Wrong choice of frame.</text>
</comment>
<accession>Q8LCL8</accession>
<accession>A0MF29</accession>
<accession>F4J261</accession>
<accession>Q3EAI5</accession>
<name>CYT1B_ARATH</name>
<evidence type="ECO:0000255" key="1"/>
<evidence type="ECO:0000256" key="2">
    <source>
        <dbReference type="SAM" id="MobiDB-lite"/>
    </source>
</evidence>
<evidence type="ECO:0000305" key="3"/>
<reference key="1">
    <citation type="journal article" date="2000" name="Nature">
        <title>Sequence and analysis of chromosome 3 of the plant Arabidopsis thaliana.</title>
        <authorList>
            <person name="Salanoubat M."/>
            <person name="Lemcke K."/>
            <person name="Rieger M."/>
            <person name="Ansorge W."/>
            <person name="Unseld M."/>
            <person name="Fartmann B."/>
            <person name="Valle G."/>
            <person name="Bloecker H."/>
            <person name="Perez-Alonso M."/>
            <person name="Obermaier B."/>
            <person name="Delseny M."/>
            <person name="Boutry M."/>
            <person name="Grivell L.A."/>
            <person name="Mache R."/>
            <person name="Puigdomenech P."/>
            <person name="De Simone V."/>
            <person name="Choisne N."/>
            <person name="Artiguenave F."/>
            <person name="Robert C."/>
            <person name="Brottier P."/>
            <person name="Wincker P."/>
            <person name="Cattolico L."/>
            <person name="Weissenbach J."/>
            <person name="Saurin W."/>
            <person name="Quetier F."/>
            <person name="Schaefer M."/>
            <person name="Mueller-Auer S."/>
            <person name="Gabel C."/>
            <person name="Fuchs M."/>
            <person name="Benes V."/>
            <person name="Wurmbach E."/>
            <person name="Drzonek H."/>
            <person name="Erfle H."/>
            <person name="Jordan N."/>
            <person name="Bangert S."/>
            <person name="Wiedelmann R."/>
            <person name="Kranz H."/>
            <person name="Voss H."/>
            <person name="Holland R."/>
            <person name="Brandt P."/>
            <person name="Nyakatura G."/>
            <person name="Vezzi A."/>
            <person name="D'Angelo M."/>
            <person name="Pallavicini A."/>
            <person name="Toppo S."/>
            <person name="Simionati B."/>
            <person name="Conrad A."/>
            <person name="Hornischer K."/>
            <person name="Kauer G."/>
            <person name="Loehnert T.-H."/>
            <person name="Nordsiek G."/>
            <person name="Reichelt J."/>
            <person name="Scharfe M."/>
            <person name="Schoen O."/>
            <person name="Bargues M."/>
            <person name="Terol J."/>
            <person name="Climent J."/>
            <person name="Navarro P."/>
            <person name="Collado C."/>
            <person name="Perez-Perez A."/>
            <person name="Ottenwaelder B."/>
            <person name="Duchemin D."/>
            <person name="Cooke R."/>
            <person name="Laudie M."/>
            <person name="Berger-Llauro C."/>
            <person name="Purnelle B."/>
            <person name="Masuy D."/>
            <person name="de Haan M."/>
            <person name="Maarse A.C."/>
            <person name="Alcaraz J.-P."/>
            <person name="Cottet A."/>
            <person name="Casacuberta E."/>
            <person name="Monfort A."/>
            <person name="Argiriou A."/>
            <person name="Flores M."/>
            <person name="Liguori R."/>
            <person name="Vitale D."/>
            <person name="Mannhaupt G."/>
            <person name="Haase D."/>
            <person name="Schoof H."/>
            <person name="Rudd S."/>
            <person name="Zaccaria P."/>
            <person name="Mewes H.-W."/>
            <person name="Mayer K.F.X."/>
            <person name="Kaul S."/>
            <person name="Town C.D."/>
            <person name="Koo H.L."/>
            <person name="Tallon L.J."/>
            <person name="Jenkins J."/>
            <person name="Rooney T."/>
            <person name="Rizzo M."/>
            <person name="Walts A."/>
            <person name="Utterback T."/>
            <person name="Fujii C.Y."/>
            <person name="Shea T.P."/>
            <person name="Creasy T.H."/>
            <person name="Haas B."/>
            <person name="Maiti R."/>
            <person name="Wu D."/>
            <person name="Peterson J."/>
            <person name="Van Aken S."/>
            <person name="Pai G."/>
            <person name="Militscher J."/>
            <person name="Sellers P."/>
            <person name="Gill J.E."/>
            <person name="Feldblyum T.V."/>
            <person name="Preuss D."/>
            <person name="Lin X."/>
            <person name="Nierman W.C."/>
            <person name="Salzberg S.L."/>
            <person name="White O."/>
            <person name="Venter J.C."/>
            <person name="Fraser C.M."/>
            <person name="Kaneko T."/>
            <person name="Nakamura Y."/>
            <person name="Sato S."/>
            <person name="Kato T."/>
            <person name="Asamizu E."/>
            <person name="Sasamoto S."/>
            <person name="Kimura T."/>
            <person name="Idesawa K."/>
            <person name="Kawashima K."/>
            <person name="Kishida Y."/>
            <person name="Kiyokawa C."/>
            <person name="Kohara M."/>
            <person name="Matsumoto M."/>
            <person name="Matsuno A."/>
            <person name="Muraki A."/>
            <person name="Nakayama S."/>
            <person name="Nakazaki N."/>
            <person name="Shinpo S."/>
            <person name="Takeuchi C."/>
            <person name="Wada T."/>
            <person name="Watanabe A."/>
            <person name="Yamada M."/>
            <person name="Yasuda M."/>
            <person name="Tabata S."/>
        </authorList>
    </citation>
    <scope>NUCLEOTIDE SEQUENCE [LARGE SCALE GENOMIC DNA]</scope>
    <source>
        <strain>cv. Columbia</strain>
    </source>
</reference>
<reference key="2">
    <citation type="journal article" date="2017" name="Plant J.">
        <title>Araport11: a complete reannotation of the Arabidopsis thaliana reference genome.</title>
        <authorList>
            <person name="Cheng C.Y."/>
            <person name="Krishnakumar V."/>
            <person name="Chan A.P."/>
            <person name="Thibaud-Nissen F."/>
            <person name="Schobel S."/>
            <person name="Town C.D."/>
        </authorList>
    </citation>
    <scope>GENOME REANNOTATION</scope>
    <source>
        <strain>cv. Columbia</strain>
    </source>
</reference>
<reference key="3">
    <citation type="submission" date="2002-03" db="EMBL/GenBank/DDBJ databases">
        <title>Full-length cDNA from Arabidopsis thaliana.</title>
        <authorList>
            <person name="Brover V.V."/>
            <person name="Troukhan M.E."/>
            <person name="Alexandrov N.A."/>
            <person name="Lu Y.-P."/>
            <person name="Flavell R.B."/>
            <person name="Feldmann K.A."/>
        </authorList>
    </citation>
    <scope>NUCLEOTIDE SEQUENCE [LARGE SCALE MRNA]</scope>
</reference>
<reference key="4">
    <citation type="journal article" date="2006" name="Plant Biotechnol. J.">
        <title>Simultaneous high-throughput recombinational cloning of open reading frames in closed and open configurations.</title>
        <authorList>
            <person name="Underwood B.A."/>
            <person name="Vanderhaeghen R."/>
            <person name="Whitford R."/>
            <person name="Town C.D."/>
            <person name="Hilson P."/>
        </authorList>
    </citation>
    <scope>NUCLEOTIDE SEQUENCE [LARGE SCALE MRNA] OF 15-101</scope>
    <source>
        <strain>cv. Columbia</strain>
    </source>
</reference>
<reference key="5">
    <citation type="submission" date="2006-03" db="EMBL/GenBank/DDBJ databases">
        <title>Arabidopsis ORF clones.</title>
        <authorList>
            <person name="Kim C.J."/>
            <person name="Chen H."/>
            <person name="Shinn P."/>
            <person name="Ecker J.R."/>
        </authorList>
    </citation>
    <scope>NUCLEOTIDE SEQUENCE [LARGE SCALE MRNA] OF 15-101</scope>
    <source>
        <strain>cv. Columbia</strain>
    </source>
</reference>
<feature type="chain" id="PRO_0000365717" description="Cysteine-rich and transmembrane domain-containing protein B">
    <location>
        <begin position="1"/>
        <end position="101"/>
    </location>
</feature>
<feature type="transmembrane region" description="Helical" evidence="1">
    <location>
        <begin position="78"/>
        <end position="95"/>
    </location>
</feature>
<feature type="region of interest" description="Disordered" evidence="2">
    <location>
        <begin position="1"/>
        <end position="80"/>
    </location>
</feature>
<feature type="compositionally biased region" description="Pro residues" evidence="2">
    <location>
        <begin position="24"/>
        <end position="43"/>
    </location>
</feature>
<feature type="compositionally biased region" description="Low complexity" evidence="2">
    <location>
        <begin position="59"/>
        <end position="77"/>
    </location>
</feature>
<feature type="sequence conflict" description="In Ref. 3; AAM63525." evidence="3" ref="3">
    <original>Y</original>
    <variation>C</variation>
    <location>
        <position position="94"/>
    </location>
</feature>
<keyword id="KW-0472">Membrane</keyword>
<keyword id="KW-1185">Reference proteome</keyword>
<keyword id="KW-0812">Transmembrane</keyword>
<keyword id="KW-1133">Transmembrane helix</keyword>
<gene>
    <name type="ordered locus">At3g57160</name>
    <name type="ORF">F24I3</name>
</gene>
<protein>
    <recommendedName>
        <fullName>Cysteine-rich and transmembrane domain-containing protein B</fullName>
    </recommendedName>
</protein>
<organism>
    <name type="scientific">Arabidopsis thaliana</name>
    <name type="common">Mouse-ear cress</name>
    <dbReference type="NCBI Taxonomy" id="3702"/>
    <lineage>
        <taxon>Eukaryota</taxon>
        <taxon>Viridiplantae</taxon>
        <taxon>Streptophyta</taxon>
        <taxon>Embryophyta</taxon>
        <taxon>Tracheophyta</taxon>
        <taxon>Spermatophyta</taxon>
        <taxon>Magnoliopsida</taxon>
        <taxon>eudicotyledons</taxon>
        <taxon>Gunneridae</taxon>
        <taxon>Pentapetalae</taxon>
        <taxon>rosids</taxon>
        <taxon>malvids</taxon>
        <taxon>Brassicales</taxon>
        <taxon>Brassicaceae</taxon>
        <taxon>Camelineae</taxon>
        <taxon>Arabidopsis</taxon>
    </lineage>
</organism>